<keyword id="KW-1185">Reference proteome</keyword>
<keyword id="KW-0808">Transferase</keyword>
<keyword id="KW-0819">tRNA processing</keyword>
<sequence length="322" mass="36522">MIQHLALDALQRHLAGSPLYGWATSLPAQISARIEEGHGDLARWWSAVQRLPQVPAPKVDLAQRFALHSDHDAALQAQMKEALQGLIPWRKGPFDFFGVQVDTEWRSDWKWERVSPHVELRGKRVLDVGCGNGYYQWRMLGAGAESVVGVDPNWLFLCQFLAAKRYLPELPAWHLPLALEDLPEKLEGFDTVFSMGVLYHRRSPIDHLLALKDCLKRGGELVLETLVVEGDASTVLVPEDRYAQMRNVWFLPSVAALELWLRRAGFADARCVDVSLTSVEEQRSTEWMRFQSLPEFLDPQDRSRTVEGLPAPMRATLVARKP</sequence>
<dbReference type="EC" id="2.5.1.-" evidence="1"/>
<dbReference type="EMBL" id="AE004091">
    <property type="protein sequence ID" value="AAG04163.1"/>
    <property type="molecule type" value="Genomic_DNA"/>
</dbReference>
<dbReference type="PIR" id="A83549">
    <property type="entry name" value="A83549"/>
</dbReference>
<dbReference type="RefSeq" id="NP_249465.1">
    <property type="nucleotide sequence ID" value="NC_002516.2"/>
</dbReference>
<dbReference type="RefSeq" id="WP_003114185.1">
    <property type="nucleotide sequence ID" value="NZ_QZGE01000007.1"/>
</dbReference>
<dbReference type="SMR" id="Q9I5G4"/>
<dbReference type="FunCoup" id="Q9I5G4">
    <property type="interactions" value="21"/>
</dbReference>
<dbReference type="STRING" id="208964.PA0774"/>
<dbReference type="PaxDb" id="208964-PA0774"/>
<dbReference type="DNASU" id="878567"/>
<dbReference type="GeneID" id="878567"/>
<dbReference type="KEGG" id="pae:PA0774"/>
<dbReference type="PATRIC" id="fig|208964.12.peg.804"/>
<dbReference type="PseudoCAP" id="PA0774"/>
<dbReference type="HOGENOM" id="CLU_052665_0_0_6"/>
<dbReference type="InParanoid" id="Q9I5G4"/>
<dbReference type="OrthoDB" id="9773188at2"/>
<dbReference type="PhylomeDB" id="Q9I5G4"/>
<dbReference type="BioCyc" id="PAER208964:G1FZ6-787-MONOMER"/>
<dbReference type="Proteomes" id="UP000002438">
    <property type="component" value="Chromosome"/>
</dbReference>
<dbReference type="GO" id="GO:0008168">
    <property type="term" value="F:methyltransferase activity"/>
    <property type="evidence" value="ECO:0000318"/>
    <property type="project" value="GO_Central"/>
</dbReference>
<dbReference type="GO" id="GO:0016765">
    <property type="term" value="F:transferase activity, transferring alkyl or aryl (other than methyl) groups"/>
    <property type="evidence" value="ECO:0007669"/>
    <property type="project" value="UniProtKB-UniRule"/>
</dbReference>
<dbReference type="GO" id="GO:0002098">
    <property type="term" value="P:tRNA wobble uridine modification"/>
    <property type="evidence" value="ECO:0007669"/>
    <property type="project" value="InterPro"/>
</dbReference>
<dbReference type="CDD" id="cd02440">
    <property type="entry name" value="AdoMet_MTases"/>
    <property type="match status" value="1"/>
</dbReference>
<dbReference type="Gene3D" id="3.40.50.150">
    <property type="entry name" value="Vaccinia Virus protein VP39"/>
    <property type="match status" value="1"/>
</dbReference>
<dbReference type="HAMAP" id="MF_01590">
    <property type="entry name" value="tRNA_carboxymethyltr_CmoB"/>
    <property type="match status" value="1"/>
</dbReference>
<dbReference type="InterPro" id="IPR010017">
    <property type="entry name" value="CmoB"/>
</dbReference>
<dbReference type="InterPro" id="IPR027555">
    <property type="entry name" value="Mo5U34_MeTrfas-like"/>
</dbReference>
<dbReference type="InterPro" id="IPR029063">
    <property type="entry name" value="SAM-dependent_MTases_sf"/>
</dbReference>
<dbReference type="NCBIfam" id="NF011650">
    <property type="entry name" value="PRK15068.1"/>
    <property type="match status" value="1"/>
</dbReference>
<dbReference type="NCBIfam" id="TIGR00452">
    <property type="entry name" value="tRNA 5-methoxyuridine(34)/uridine 5-oxyacetic acid(34) synthase CmoB"/>
    <property type="match status" value="1"/>
</dbReference>
<dbReference type="PANTHER" id="PTHR43464">
    <property type="entry name" value="METHYLTRANSFERASE"/>
    <property type="match status" value="1"/>
</dbReference>
<dbReference type="PANTHER" id="PTHR43464:SF95">
    <property type="entry name" value="TRNA U34 CARBOXYMETHYLTRANSFERASE"/>
    <property type="match status" value="1"/>
</dbReference>
<dbReference type="Pfam" id="PF08003">
    <property type="entry name" value="Methyltransf_9"/>
    <property type="match status" value="1"/>
</dbReference>
<dbReference type="SUPFAM" id="SSF53335">
    <property type="entry name" value="S-adenosyl-L-methionine-dependent methyltransferases"/>
    <property type="match status" value="1"/>
</dbReference>
<gene>
    <name evidence="1" type="primary">cmoB</name>
    <name type="ordered locus">PA0774</name>
</gene>
<feature type="chain" id="PRO_0000313944" description="tRNA U34 carboxymethyltransferase">
    <location>
        <begin position="1"/>
        <end position="322"/>
    </location>
</feature>
<feature type="binding site" evidence="1">
    <location>
        <position position="91"/>
    </location>
    <ligand>
        <name>carboxy-S-adenosyl-L-methionine</name>
        <dbReference type="ChEBI" id="CHEBI:134278"/>
    </ligand>
</feature>
<feature type="binding site" evidence="1">
    <location>
        <position position="105"/>
    </location>
    <ligand>
        <name>carboxy-S-adenosyl-L-methionine</name>
        <dbReference type="ChEBI" id="CHEBI:134278"/>
    </ligand>
</feature>
<feature type="binding site" evidence="1">
    <location>
        <position position="110"/>
    </location>
    <ligand>
        <name>carboxy-S-adenosyl-L-methionine</name>
        <dbReference type="ChEBI" id="CHEBI:134278"/>
    </ligand>
</feature>
<feature type="binding site" evidence="1">
    <location>
        <position position="129"/>
    </location>
    <ligand>
        <name>carboxy-S-adenosyl-L-methionine</name>
        <dbReference type="ChEBI" id="CHEBI:134278"/>
    </ligand>
</feature>
<feature type="binding site" evidence="1">
    <location>
        <begin position="179"/>
        <end position="180"/>
    </location>
    <ligand>
        <name>carboxy-S-adenosyl-L-methionine</name>
        <dbReference type="ChEBI" id="CHEBI:134278"/>
    </ligand>
</feature>
<feature type="binding site" evidence="1">
    <location>
        <position position="195"/>
    </location>
    <ligand>
        <name>carboxy-S-adenosyl-L-methionine</name>
        <dbReference type="ChEBI" id="CHEBI:134278"/>
    </ligand>
</feature>
<feature type="binding site" evidence="1">
    <location>
        <position position="199"/>
    </location>
    <ligand>
        <name>carboxy-S-adenosyl-L-methionine</name>
        <dbReference type="ChEBI" id="CHEBI:134278"/>
    </ligand>
</feature>
<feature type="binding site" evidence="1">
    <location>
        <position position="314"/>
    </location>
    <ligand>
        <name>carboxy-S-adenosyl-L-methionine</name>
        <dbReference type="ChEBI" id="CHEBI:134278"/>
    </ligand>
</feature>
<reference key="1">
    <citation type="journal article" date="2000" name="Nature">
        <title>Complete genome sequence of Pseudomonas aeruginosa PAO1, an opportunistic pathogen.</title>
        <authorList>
            <person name="Stover C.K."/>
            <person name="Pham X.-Q.T."/>
            <person name="Erwin A.L."/>
            <person name="Mizoguchi S.D."/>
            <person name="Warrener P."/>
            <person name="Hickey M.J."/>
            <person name="Brinkman F.S.L."/>
            <person name="Hufnagle W.O."/>
            <person name="Kowalik D.J."/>
            <person name="Lagrou M."/>
            <person name="Garber R.L."/>
            <person name="Goltry L."/>
            <person name="Tolentino E."/>
            <person name="Westbrock-Wadman S."/>
            <person name="Yuan Y."/>
            <person name="Brody L.L."/>
            <person name="Coulter S.N."/>
            <person name="Folger K.R."/>
            <person name="Kas A."/>
            <person name="Larbig K."/>
            <person name="Lim R.M."/>
            <person name="Smith K.A."/>
            <person name="Spencer D.H."/>
            <person name="Wong G.K.-S."/>
            <person name="Wu Z."/>
            <person name="Paulsen I.T."/>
            <person name="Reizer J."/>
            <person name="Saier M.H. Jr."/>
            <person name="Hancock R.E.W."/>
            <person name="Lory S."/>
            <person name="Olson M.V."/>
        </authorList>
    </citation>
    <scope>NUCLEOTIDE SEQUENCE [LARGE SCALE GENOMIC DNA]</scope>
    <source>
        <strain>ATCC 15692 / DSM 22644 / CIP 104116 / JCM 14847 / LMG 12228 / 1C / PRS 101 / PAO1</strain>
    </source>
</reference>
<evidence type="ECO:0000255" key="1">
    <source>
        <dbReference type="HAMAP-Rule" id="MF_01590"/>
    </source>
</evidence>
<organism>
    <name type="scientific">Pseudomonas aeruginosa (strain ATCC 15692 / DSM 22644 / CIP 104116 / JCM 14847 / LMG 12228 / 1C / PRS 101 / PAO1)</name>
    <dbReference type="NCBI Taxonomy" id="208964"/>
    <lineage>
        <taxon>Bacteria</taxon>
        <taxon>Pseudomonadati</taxon>
        <taxon>Pseudomonadota</taxon>
        <taxon>Gammaproteobacteria</taxon>
        <taxon>Pseudomonadales</taxon>
        <taxon>Pseudomonadaceae</taxon>
        <taxon>Pseudomonas</taxon>
    </lineage>
</organism>
<proteinExistence type="inferred from homology"/>
<comment type="function">
    <text evidence="1">Catalyzes carboxymethyl transfer from carboxy-S-adenosyl-L-methionine (Cx-SAM) to 5-hydroxyuridine (ho5U) to form 5-carboxymethoxyuridine (cmo5U) at position 34 in tRNAs.</text>
</comment>
<comment type="catalytic activity">
    <reaction evidence="1">
        <text>carboxy-S-adenosyl-L-methionine + 5-hydroxyuridine(34) in tRNA = 5-carboxymethoxyuridine(34) in tRNA + S-adenosyl-L-homocysteine + H(+)</text>
        <dbReference type="Rhea" id="RHEA:52848"/>
        <dbReference type="Rhea" id="RHEA-COMP:13381"/>
        <dbReference type="Rhea" id="RHEA-COMP:13383"/>
        <dbReference type="ChEBI" id="CHEBI:15378"/>
        <dbReference type="ChEBI" id="CHEBI:57856"/>
        <dbReference type="ChEBI" id="CHEBI:134278"/>
        <dbReference type="ChEBI" id="CHEBI:136877"/>
        <dbReference type="ChEBI" id="CHEBI:136879"/>
    </reaction>
</comment>
<comment type="subunit">
    <text evidence="1">Homotetramer.</text>
</comment>
<comment type="similarity">
    <text evidence="1">Belongs to the class I-like SAM-binding methyltransferase superfamily. CmoB family.</text>
</comment>
<accession>Q9I5G4</accession>
<name>CMOB_PSEAE</name>
<protein>
    <recommendedName>
        <fullName evidence="1">tRNA U34 carboxymethyltransferase</fullName>
        <ecNumber evidence="1">2.5.1.-</ecNumber>
    </recommendedName>
</protein>